<accession>O34734</accession>
<accession>Q796I6</accession>
<protein>
    <recommendedName>
        <fullName>Sulfate permease CysP</fullName>
    </recommendedName>
</protein>
<sequence>MELAAILFSLFFAMNIGASGAAASMGVAYGSGAIKKKTYALILCAVGVFAGAVIGGGEVVKTISSGIIPEQTITLTIVCIIIGAAALSLFTANLLGIPLSTSEVTVGAVVGVGVAYKVLFVNNLLIIVSFWVFVPLFAFGFTYFVSKLFRYFKIEVKSSKKQKILGIVLLVAGFFEAFSAGMNNVANAVGPLVAAGVLDVGKGTLYGGAFVALGALLLGRRVLETNGKKITRFSKGEGILLSGTGAGLVIISSVFGMPVPLAQVTSSSIIGIGMAKNGPNVFHKQVVQTMLKVWIVSPFLSLSISYLLVSLFLKADYYSIFIMVSVLLAAGGAISLTKAIRKERRSVHEQGGGI</sequence>
<dbReference type="EMBL" id="AJ000974">
    <property type="protein sequence ID" value="CAA04410.1"/>
    <property type="molecule type" value="Genomic_DNA"/>
</dbReference>
<dbReference type="EMBL" id="AL009126">
    <property type="protein sequence ID" value="CAB13432.1"/>
    <property type="molecule type" value="Genomic_DNA"/>
</dbReference>
<dbReference type="PIR" id="A69877">
    <property type="entry name" value="A69877"/>
</dbReference>
<dbReference type="RefSeq" id="NP_389441.1">
    <property type="nucleotide sequence ID" value="NC_000964.3"/>
</dbReference>
<dbReference type="RefSeq" id="WP_003232101.1">
    <property type="nucleotide sequence ID" value="NZ_OZ025638.1"/>
</dbReference>
<dbReference type="SMR" id="O34734"/>
<dbReference type="FunCoup" id="O34734">
    <property type="interactions" value="21"/>
</dbReference>
<dbReference type="STRING" id="224308.BSU15580"/>
<dbReference type="TCDB" id="2.A.20.4.1">
    <property type="family name" value="the inorganic phosphate transporter (pit) family"/>
</dbReference>
<dbReference type="PaxDb" id="224308-BSU15580"/>
<dbReference type="EnsemblBacteria" id="CAB13432">
    <property type="protein sequence ID" value="CAB13432"/>
    <property type="gene ID" value="BSU_15580"/>
</dbReference>
<dbReference type="GeneID" id="935990"/>
<dbReference type="KEGG" id="bsu:BSU15580"/>
<dbReference type="PATRIC" id="fig|224308.179.peg.1698"/>
<dbReference type="eggNOG" id="COG0306">
    <property type="taxonomic scope" value="Bacteria"/>
</dbReference>
<dbReference type="InParanoid" id="O34734"/>
<dbReference type="OrthoDB" id="19855at2"/>
<dbReference type="BioCyc" id="BSUB:BSU15580-MONOMER"/>
<dbReference type="Proteomes" id="UP000001570">
    <property type="component" value="Chromosome"/>
</dbReference>
<dbReference type="GO" id="GO:0005886">
    <property type="term" value="C:plasma membrane"/>
    <property type="evidence" value="ECO:0007669"/>
    <property type="project" value="UniProtKB-SubCell"/>
</dbReference>
<dbReference type="GO" id="GO:0005315">
    <property type="term" value="F:phosphate transmembrane transporter activity"/>
    <property type="evidence" value="ECO:0000318"/>
    <property type="project" value="GO_Central"/>
</dbReference>
<dbReference type="GO" id="GO:0035435">
    <property type="term" value="P:phosphate ion transmembrane transport"/>
    <property type="evidence" value="ECO:0000318"/>
    <property type="project" value="GO_Central"/>
</dbReference>
<dbReference type="InterPro" id="IPR001204">
    <property type="entry name" value="Phos_transporter"/>
</dbReference>
<dbReference type="PANTHER" id="PTHR11101">
    <property type="entry name" value="PHOSPHATE TRANSPORTER"/>
    <property type="match status" value="1"/>
</dbReference>
<dbReference type="PANTHER" id="PTHR11101:SF80">
    <property type="entry name" value="PHOSPHATE TRANSPORTER"/>
    <property type="match status" value="1"/>
</dbReference>
<dbReference type="Pfam" id="PF01384">
    <property type="entry name" value="PHO4"/>
    <property type="match status" value="1"/>
</dbReference>
<keyword id="KW-1003">Cell membrane</keyword>
<keyword id="KW-0472">Membrane</keyword>
<keyword id="KW-1185">Reference proteome</keyword>
<keyword id="KW-0764">Sulfate transport</keyword>
<keyword id="KW-0812">Transmembrane</keyword>
<keyword id="KW-1133">Transmembrane helix</keyword>
<keyword id="KW-0813">Transport</keyword>
<name>SULP_BACSU</name>
<proteinExistence type="evidence at protein level"/>
<comment type="function">
    <text evidence="2">Involved in the import of sulfate.</text>
</comment>
<comment type="subcellular location">
    <subcellularLocation>
        <location evidence="2">Cell membrane</location>
        <topology evidence="2">Multi-pass membrane protein</topology>
    </subcellularLocation>
</comment>
<comment type="induction">
    <text evidence="3">Up-regulated by sulfur starvation and repressed by cysteine. Also induced by O-acetyl-L-serine (OAS), a direct precursor of cysteine, maybe via inactivation of a putative transcriptional repressor of the cysH operon whose activity is controlled by the intracellular levels of OAS.</text>
</comment>
<comment type="similarity">
    <text evidence="4">Belongs to the inorganic phosphate transporter (PiT) (TC 2.A.20) family.</text>
</comment>
<reference key="1">
    <citation type="submission" date="1997-10" db="EMBL/GenBank/DDBJ databases">
        <title>Cloning and sequencing 8 Kbp of DNA from Bacillus subtilis downstream of the pyr operon.</title>
        <authorList>
            <person name="Foulger D."/>
            <person name="Errington J."/>
        </authorList>
    </citation>
    <scope>NUCLEOTIDE SEQUENCE [GENOMIC DNA]</scope>
    <source>
        <strain>168</strain>
    </source>
</reference>
<reference key="2">
    <citation type="journal article" date="1997" name="Nature">
        <title>The complete genome sequence of the Gram-positive bacterium Bacillus subtilis.</title>
        <authorList>
            <person name="Kunst F."/>
            <person name="Ogasawara N."/>
            <person name="Moszer I."/>
            <person name="Albertini A.M."/>
            <person name="Alloni G."/>
            <person name="Azevedo V."/>
            <person name="Bertero M.G."/>
            <person name="Bessieres P."/>
            <person name="Bolotin A."/>
            <person name="Borchert S."/>
            <person name="Borriss R."/>
            <person name="Boursier L."/>
            <person name="Brans A."/>
            <person name="Braun M."/>
            <person name="Brignell S.C."/>
            <person name="Bron S."/>
            <person name="Brouillet S."/>
            <person name="Bruschi C.V."/>
            <person name="Caldwell B."/>
            <person name="Capuano V."/>
            <person name="Carter N.M."/>
            <person name="Choi S.-K."/>
            <person name="Codani J.-J."/>
            <person name="Connerton I.F."/>
            <person name="Cummings N.J."/>
            <person name="Daniel R.A."/>
            <person name="Denizot F."/>
            <person name="Devine K.M."/>
            <person name="Duesterhoeft A."/>
            <person name="Ehrlich S.D."/>
            <person name="Emmerson P.T."/>
            <person name="Entian K.-D."/>
            <person name="Errington J."/>
            <person name="Fabret C."/>
            <person name="Ferrari E."/>
            <person name="Foulger D."/>
            <person name="Fritz C."/>
            <person name="Fujita M."/>
            <person name="Fujita Y."/>
            <person name="Fuma S."/>
            <person name="Galizzi A."/>
            <person name="Galleron N."/>
            <person name="Ghim S.-Y."/>
            <person name="Glaser P."/>
            <person name="Goffeau A."/>
            <person name="Golightly E.J."/>
            <person name="Grandi G."/>
            <person name="Guiseppi G."/>
            <person name="Guy B.J."/>
            <person name="Haga K."/>
            <person name="Haiech J."/>
            <person name="Harwood C.R."/>
            <person name="Henaut A."/>
            <person name="Hilbert H."/>
            <person name="Holsappel S."/>
            <person name="Hosono S."/>
            <person name="Hullo M.-F."/>
            <person name="Itaya M."/>
            <person name="Jones L.-M."/>
            <person name="Joris B."/>
            <person name="Karamata D."/>
            <person name="Kasahara Y."/>
            <person name="Klaerr-Blanchard M."/>
            <person name="Klein C."/>
            <person name="Kobayashi Y."/>
            <person name="Koetter P."/>
            <person name="Koningstein G."/>
            <person name="Krogh S."/>
            <person name="Kumano M."/>
            <person name="Kurita K."/>
            <person name="Lapidus A."/>
            <person name="Lardinois S."/>
            <person name="Lauber J."/>
            <person name="Lazarevic V."/>
            <person name="Lee S.-M."/>
            <person name="Levine A."/>
            <person name="Liu H."/>
            <person name="Masuda S."/>
            <person name="Mauel C."/>
            <person name="Medigue C."/>
            <person name="Medina N."/>
            <person name="Mellado R.P."/>
            <person name="Mizuno M."/>
            <person name="Moestl D."/>
            <person name="Nakai S."/>
            <person name="Noback M."/>
            <person name="Noone D."/>
            <person name="O'Reilly M."/>
            <person name="Ogawa K."/>
            <person name="Ogiwara A."/>
            <person name="Oudega B."/>
            <person name="Park S.-H."/>
            <person name="Parro V."/>
            <person name="Pohl T.M."/>
            <person name="Portetelle D."/>
            <person name="Porwollik S."/>
            <person name="Prescott A.M."/>
            <person name="Presecan E."/>
            <person name="Pujic P."/>
            <person name="Purnelle B."/>
            <person name="Rapoport G."/>
            <person name="Rey M."/>
            <person name="Reynolds S."/>
            <person name="Rieger M."/>
            <person name="Rivolta C."/>
            <person name="Rocha E."/>
            <person name="Roche B."/>
            <person name="Rose M."/>
            <person name="Sadaie Y."/>
            <person name="Sato T."/>
            <person name="Scanlan E."/>
            <person name="Schleich S."/>
            <person name="Schroeter R."/>
            <person name="Scoffone F."/>
            <person name="Sekiguchi J."/>
            <person name="Sekowska A."/>
            <person name="Seror S.J."/>
            <person name="Serror P."/>
            <person name="Shin B.-S."/>
            <person name="Soldo B."/>
            <person name="Sorokin A."/>
            <person name="Tacconi E."/>
            <person name="Takagi T."/>
            <person name="Takahashi H."/>
            <person name="Takemaru K."/>
            <person name="Takeuchi M."/>
            <person name="Tamakoshi A."/>
            <person name="Tanaka T."/>
            <person name="Terpstra P."/>
            <person name="Tognoni A."/>
            <person name="Tosato V."/>
            <person name="Uchiyama S."/>
            <person name="Vandenbol M."/>
            <person name="Vannier F."/>
            <person name="Vassarotti A."/>
            <person name="Viari A."/>
            <person name="Wambutt R."/>
            <person name="Wedler E."/>
            <person name="Wedler H."/>
            <person name="Weitzenegger T."/>
            <person name="Winters P."/>
            <person name="Wipat A."/>
            <person name="Yamamoto H."/>
            <person name="Yamane K."/>
            <person name="Yasumoto K."/>
            <person name="Yata K."/>
            <person name="Yoshida K."/>
            <person name="Yoshikawa H.-F."/>
            <person name="Zumstein E."/>
            <person name="Yoshikawa H."/>
            <person name="Danchin A."/>
        </authorList>
    </citation>
    <scope>NUCLEOTIDE SEQUENCE [LARGE SCALE GENOMIC DNA]</scope>
    <source>
        <strain>168</strain>
    </source>
</reference>
<reference key="3">
    <citation type="journal article" date="2000" name="J. Bacteriol.">
        <title>Transcriptional control of the sulfur-regulated cysH operon, containing genes involved in L-cysteine biosynthesis in Bacillus subtilis.</title>
        <authorList>
            <person name="Mansilla M.C."/>
            <person name="Albanesi D."/>
            <person name="de Mendoza D."/>
        </authorList>
    </citation>
    <scope>INDUCTION</scope>
    <source>
        <strain>168 / JH642</strain>
    </source>
</reference>
<reference key="4">
    <citation type="journal article" date="2000" name="Microbiology">
        <title>The Bacillus subtilis cysP gene encodes a novel sulphate permease related to the inorganic phosphate transporter (Pit) family.</title>
        <authorList>
            <person name="Mansilla M.C."/>
            <person name="de Mendoza D."/>
        </authorList>
    </citation>
    <scope>FUNCTION AS A SULFATE PERMEASE</scope>
    <scope>SUBCELLULAR LOCATION</scope>
    <source>
        <strain>168 / JH642</strain>
    </source>
</reference>
<feature type="chain" id="PRO_0000378203" description="Sulfate permease CysP">
    <location>
        <begin position="1"/>
        <end position="354"/>
    </location>
</feature>
<feature type="transmembrane region" description="Helical" evidence="1">
    <location>
        <begin position="3"/>
        <end position="23"/>
    </location>
</feature>
<feature type="transmembrane region" description="Helical" evidence="1">
    <location>
        <begin position="40"/>
        <end position="60"/>
    </location>
</feature>
<feature type="transmembrane region" description="Helical" evidence="1">
    <location>
        <begin position="77"/>
        <end position="97"/>
    </location>
</feature>
<feature type="transmembrane region" description="Helical" evidence="1">
    <location>
        <begin position="125"/>
        <end position="145"/>
    </location>
</feature>
<feature type="transmembrane region" description="Helical" evidence="1">
    <location>
        <begin position="164"/>
        <end position="184"/>
    </location>
</feature>
<feature type="transmembrane region" description="Helical" evidence="1">
    <location>
        <begin position="197"/>
        <end position="217"/>
    </location>
</feature>
<feature type="transmembrane region" description="Helical" evidence="1">
    <location>
        <begin position="293"/>
        <end position="313"/>
    </location>
</feature>
<feature type="transmembrane region" description="Helical" evidence="1">
    <location>
        <begin position="320"/>
        <end position="340"/>
    </location>
</feature>
<gene>
    <name type="primary">cysP</name>
    <name type="synonym">ylnA</name>
    <name type="ordered locus">BSU15580</name>
</gene>
<organism>
    <name type="scientific">Bacillus subtilis (strain 168)</name>
    <dbReference type="NCBI Taxonomy" id="224308"/>
    <lineage>
        <taxon>Bacteria</taxon>
        <taxon>Bacillati</taxon>
        <taxon>Bacillota</taxon>
        <taxon>Bacilli</taxon>
        <taxon>Bacillales</taxon>
        <taxon>Bacillaceae</taxon>
        <taxon>Bacillus</taxon>
    </lineage>
</organism>
<evidence type="ECO:0000255" key="1"/>
<evidence type="ECO:0000269" key="2">
    <source>
    </source>
</evidence>
<evidence type="ECO:0000269" key="3">
    <source>
    </source>
</evidence>
<evidence type="ECO:0000305" key="4"/>